<gene>
    <name type="primary">med25</name>
</gene>
<keyword id="KW-0010">Activator</keyword>
<keyword id="KW-0539">Nucleus</keyword>
<keyword id="KW-1185">Reference proteome</keyword>
<keyword id="KW-0804">Transcription</keyword>
<keyword id="KW-0805">Transcription regulation</keyword>
<proteinExistence type="evidence at transcript level"/>
<dbReference type="EMBL" id="BC135482">
    <property type="protein sequence ID" value="AAI35483.1"/>
    <property type="molecule type" value="mRNA"/>
</dbReference>
<dbReference type="RefSeq" id="NP_001096266.1">
    <property type="nucleotide sequence ID" value="NM_001102796.1"/>
</dbReference>
<dbReference type="RefSeq" id="XP_031760614.1">
    <property type="nucleotide sequence ID" value="XM_031904754.1"/>
</dbReference>
<dbReference type="RefSeq" id="XP_031760615.1">
    <property type="nucleotide sequence ID" value="XM_031904755.1"/>
</dbReference>
<dbReference type="SMR" id="A4IHD9"/>
<dbReference type="FunCoup" id="A4IHD9">
    <property type="interactions" value="1981"/>
</dbReference>
<dbReference type="STRING" id="8364.ENSXETP00000019204"/>
<dbReference type="PaxDb" id="8364-ENSXETP00000000590"/>
<dbReference type="DNASU" id="100124831"/>
<dbReference type="GeneID" id="100124831"/>
<dbReference type="KEGG" id="xtr:100124831"/>
<dbReference type="AGR" id="Xenbase:XB-GENE-5830877"/>
<dbReference type="CTD" id="81857"/>
<dbReference type="Xenbase" id="XB-GENE-5830877">
    <property type="gene designation" value="med25"/>
</dbReference>
<dbReference type="eggNOG" id="ENOG502QRN5">
    <property type="taxonomic scope" value="Eukaryota"/>
</dbReference>
<dbReference type="HOGENOM" id="CLU_007594_0_0_1"/>
<dbReference type="InParanoid" id="A4IHD9"/>
<dbReference type="OMA" id="NDQQKIP"/>
<dbReference type="OrthoDB" id="7690434at2759"/>
<dbReference type="PhylomeDB" id="A4IHD9"/>
<dbReference type="TreeFam" id="TF329598"/>
<dbReference type="Proteomes" id="UP000008143">
    <property type="component" value="Chromosome 7"/>
</dbReference>
<dbReference type="ExpressionAtlas" id="A4IHD9">
    <property type="expression patterns" value="baseline"/>
</dbReference>
<dbReference type="GO" id="GO:0005634">
    <property type="term" value="C:nucleus"/>
    <property type="evidence" value="ECO:0007669"/>
    <property type="project" value="UniProtKB-SubCell"/>
</dbReference>
<dbReference type="FunFam" id="2.40.290.30:FF:000001">
    <property type="entry name" value="Mediator of RNA polymerase II transcription subunit 25"/>
    <property type="match status" value="1"/>
</dbReference>
<dbReference type="Gene3D" id="2.40.290.30">
    <property type="entry name" value="Mediator complex subunit 25, ACID domain"/>
    <property type="match status" value="1"/>
</dbReference>
<dbReference type="InterPro" id="IPR021394">
    <property type="entry name" value="Med25_PTOV"/>
</dbReference>
<dbReference type="InterPro" id="IPR038196">
    <property type="entry name" value="Med25_PTOV_sf"/>
</dbReference>
<dbReference type="InterPro" id="IPR021397">
    <property type="entry name" value="Mediator_Med25_SD1"/>
</dbReference>
<dbReference type="InterPro" id="IPR021419">
    <property type="entry name" value="Mediator_Med25_VWA"/>
</dbReference>
<dbReference type="InterPro" id="IPR002035">
    <property type="entry name" value="VWF_A"/>
</dbReference>
<dbReference type="InterPro" id="IPR036465">
    <property type="entry name" value="vWFA_dom_sf"/>
</dbReference>
<dbReference type="PANTHER" id="PTHR12433">
    <property type="entry name" value="MEDIATOR OF RNA POLYMERASE II TRANSCRIPTION SUBUNIT 25"/>
    <property type="match status" value="1"/>
</dbReference>
<dbReference type="PANTHER" id="PTHR12433:SF11">
    <property type="entry name" value="MEDIATOR OF RNA POLYMERASE II TRANSCRIPTION SUBUNIT 25"/>
    <property type="match status" value="1"/>
</dbReference>
<dbReference type="Pfam" id="PF11232">
    <property type="entry name" value="Med25"/>
    <property type="match status" value="1"/>
</dbReference>
<dbReference type="Pfam" id="PF11235">
    <property type="entry name" value="Med25_SD1"/>
    <property type="match status" value="1"/>
</dbReference>
<dbReference type="Pfam" id="PF11265">
    <property type="entry name" value="Med25_VWA"/>
    <property type="match status" value="1"/>
</dbReference>
<dbReference type="SUPFAM" id="SSF53300">
    <property type="entry name" value="vWA-like"/>
    <property type="match status" value="1"/>
</dbReference>
<dbReference type="PROSITE" id="PS50234">
    <property type="entry name" value="VWFA"/>
    <property type="match status" value="1"/>
</dbReference>
<comment type="function">
    <text evidence="1">Component of the Mediator complex, a coactivator involved in the regulated transcription of nearly all RNA polymerase II-dependent genes. Mediator functions as a bridge to convey information from gene-specific regulatory proteins to the basal RNA polymerase II transcription machinery. Mediator is recruited to promoters by direct interactions with regulatory proteins and serves as a scaffold for the assembly of a functional preinitiation complex with RNA polymerase II and the general transcription factors (By similarity).</text>
</comment>
<comment type="subunit">
    <text evidence="1">Component of the Mediator complex.</text>
</comment>
<comment type="subcellular location">
    <subcellularLocation>
        <location evidence="1">Nucleus</location>
    </subcellularLocation>
</comment>
<comment type="similarity">
    <text evidence="3">Belongs to the Mediator complex subunit 25 family.</text>
</comment>
<evidence type="ECO:0000250" key="1"/>
<evidence type="ECO:0000256" key="2">
    <source>
        <dbReference type="SAM" id="MobiDB-lite"/>
    </source>
</evidence>
<evidence type="ECO:0000305" key="3"/>
<reference key="1">
    <citation type="submission" date="2007-03" db="EMBL/GenBank/DDBJ databases">
        <authorList>
            <consortium name="NIH - Xenopus Gene Collection (XGC) project"/>
        </authorList>
    </citation>
    <scope>NUCLEOTIDE SEQUENCE [LARGE SCALE MRNA]</scope>
    <source>
        <tissue>Embryo</tissue>
    </source>
</reference>
<accession>A4IHD9</accession>
<name>MED25_XENTR</name>
<feature type="chain" id="PRO_0000304956" description="Mediator of RNA polymerase II transcription subunit 25">
    <location>
        <begin position="1"/>
        <end position="805"/>
    </location>
</feature>
<feature type="region of interest" description="Disordered" evidence="2">
    <location>
        <begin position="308"/>
        <end position="332"/>
    </location>
</feature>
<feature type="region of interest" description="Disordered" evidence="2">
    <location>
        <begin position="647"/>
        <end position="691"/>
    </location>
</feature>
<feature type="short sequence motif" description="LXXLL motif">
    <location>
        <begin position="691"/>
        <end position="695"/>
    </location>
</feature>
<feature type="compositionally biased region" description="Low complexity" evidence="2">
    <location>
        <begin position="647"/>
        <end position="678"/>
    </location>
</feature>
<organism>
    <name type="scientific">Xenopus tropicalis</name>
    <name type="common">Western clawed frog</name>
    <name type="synonym">Silurana tropicalis</name>
    <dbReference type="NCBI Taxonomy" id="8364"/>
    <lineage>
        <taxon>Eukaryota</taxon>
        <taxon>Metazoa</taxon>
        <taxon>Chordata</taxon>
        <taxon>Craniata</taxon>
        <taxon>Vertebrata</taxon>
        <taxon>Euteleostomi</taxon>
        <taxon>Amphibia</taxon>
        <taxon>Batrachia</taxon>
        <taxon>Anura</taxon>
        <taxon>Pipoidea</taxon>
        <taxon>Pipidae</taxon>
        <taxon>Xenopodinae</taxon>
        <taxon>Xenopus</taxon>
        <taxon>Silurana</taxon>
    </lineage>
</organism>
<protein>
    <recommendedName>
        <fullName>Mediator of RNA polymerase II transcription subunit 25</fullName>
    </recommendedName>
    <alternativeName>
        <fullName>Mediator complex subunit 25</fullName>
    </alternativeName>
</protein>
<sequence>MDAATPGNGGIISDVVFVIEGTANLGPYFESLRKHYLLPAIEYFNGGPPAETDFGGDYGGTQYSLVVFNTVDCAPESYVQCHAPTSSAYEFVQWLDSIRFMGGGGESCSLIAEGLSTALQLFDDFKKMREQIGQTHKVCILICNSPPYLLPAVESTTYSGYTTENLVQKIGERGIHFSVISPRKLPALRTLFEKAMPVGLIEPQPKDYSQDPRHMILVRGMVLPVGGATSVPGVIPPKQPISQPPLPVVPPQIANAPSHQLPPVQPPYMQVPQQNTLTTAHAAAQSAVEAAKNQKNNLPNRFPLPNLNQMPPTSAVGTPFNQPPPPAMPQNTSVPKMVTSTASLMTPASQPSLVTTVTTGPGPAPVQLQQQGAQQQPVPPSMPITGAAGGVQAPQPSQPQIGTAQLPCTQTPVNGNKLLAWSGVLEWQEKPRSVSVDNNAKLTRSLPCQVYVNPGENLKTDQWPQKLIMQLIPQQLLTTLGPLFRNSRMVQFHFTNKDLESLKGLYRIMGSGFQAGCVHFPHTTPCEVRVLMLLYSSKKKIFMGLIPNDQSGFVNGIRQVITNHKQVQMQKIDQQRNMGAGQAVGTGNVPANTQAFLQKQPGALPVAQAVPQQMQGQQVAPGMPSISQVTMMDEQQRTQNLLHIRVQQPQQAASQAPPQATQTTVQAPGQPQNPQPGAMLRPQNPGANPQLRNLLLSQQPPQTSVPQTQQPLHHMQQAAQGMLPHQAMGQQMQHQAPGQQQLQLPGQTLMHQAPAQQWGNQMQQRAPIPGTLMMSAGPRGPVPQQGLQQVQAQSVMEDDILMDLI</sequence>